<comment type="function">
    <text evidence="2">A probable ATP-dependent DNA helicase implicated in DNA repair and the maintenance of genomic stability. Acts as an anti-recombinase to counteract toxic recombination and limit crossover during meiosis. Regulates meiotic recombination and crossover homeostasis by physically dissociating strand invasion events and thereby promotes noncrossover repair by meiotic synthesis dependent strand annealing (SDSA) as well as disassembly of D loop recombination intermediates.</text>
</comment>
<comment type="catalytic activity">
    <reaction evidence="2">
        <text>ATP + H2O = ADP + phosphate + H(+)</text>
        <dbReference type="Rhea" id="RHEA:13065"/>
        <dbReference type="ChEBI" id="CHEBI:15377"/>
        <dbReference type="ChEBI" id="CHEBI:15378"/>
        <dbReference type="ChEBI" id="CHEBI:30616"/>
        <dbReference type="ChEBI" id="CHEBI:43474"/>
        <dbReference type="ChEBI" id="CHEBI:456216"/>
    </reaction>
</comment>
<comment type="subcellular location">
    <subcellularLocation>
        <location evidence="2">Nucleus</location>
    </subcellularLocation>
</comment>
<comment type="similarity">
    <text evidence="2">Belongs to the helicase family. RAD3/XPD subfamily.</text>
</comment>
<name>RTEL1_DROSE</name>
<gene>
    <name type="ORF">GM12432</name>
</gene>
<proteinExistence type="inferred from homology"/>
<accession>B4I0K4</accession>
<organism>
    <name type="scientific">Drosophila sechellia</name>
    <name type="common">Fruit fly</name>
    <dbReference type="NCBI Taxonomy" id="7238"/>
    <lineage>
        <taxon>Eukaryota</taxon>
        <taxon>Metazoa</taxon>
        <taxon>Ecdysozoa</taxon>
        <taxon>Arthropoda</taxon>
        <taxon>Hexapoda</taxon>
        <taxon>Insecta</taxon>
        <taxon>Pterygota</taxon>
        <taxon>Neoptera</taxon>
        <taxon>Endopterygota</taxon>
        <taxon>Diptera</taxon>
        <taxon>Brachycera</taxon>
        <taxon>Muscomorpha</taxon>
        <taxon>Ephydroidea</taxon>
        <taxon>Drosophilidae</taxon>
        <taxon>Drosophila</taxon>
        <taxon>Sophophora</taxon>
    </lineage>
</organism>
<feature type="chain" id="PRO_0000370627" description="Regulator of telomere elongation helicase 1 homolog">
    <location>
        <begin position="1"/>
        <end position="966"/>
    </location>
</feature>
<feature type="domain" description="Helicase ATP-binding" evidence="2">
    <location>
        <begin position="7"/>
        <end position="284"/>
    </location>
</feature>
<feature type="region of interest" description="Disordered" evidence="3">
    <location>
        <begin position="844"/>
        <end position="864"/>
    </location>
</feature>
<feature type="short sequence motif" description="DEAH box">
    <location>
        <begin position="233"/>
        <end position="236"/>
    </location>
</feature>
<feature type="compositionally biased region" description="Polar residues" evidence="3">
    <location>
        <begin position="853"/>
        <end position="863"/>
    </location>
</feature>
<feature type="binding site" evidence="2">
    <location>
        <begin position="42"/>
        <end position="49"/>
    </location>
    <ligand>
        <name>ATP</name>
        <dbReference type="ChEBI" id="CHEBI:30616"/>
    </ligand>
</feature>
<feature type="binding site" evidence="2">
    <location>
        <position position="146"/>
    </location>
    <ligand>
        <name>[4Fe-4S] cluster</name>
        <dbReference type="ChEBI" id="CHEBI:49883"/>
    </ligand>
</feature>
<feature type="binding site" evidence="2">
    <location>
        <position position="164"/>
    </location>
    <ligand>
        <name>[4Fe-4S] cluster</name>
        <dbReference type="ChEBI" id="CHEBI:49883"/>
    </ligand>
</feature>
<feature type="binding site" evidence="2">
    <location>
        <position position="173"/>
    </location>
    <ligand>
        <name>[4Fe-4S] cluster</name>
        <dbReference type="ChEBI" id="CHEBI:49883"/>
    </ligand>
</feature>
<feature type="binding site" evidence="2">
    <location>
        <position position="209"/>
    </location>
    <ligand>
        <name>[4Fe-4S] cluster</name>
        <dbReference type="ChEBI" id="CHEBI:49883"/>
    </ligand>
</feature>
<feature type="modified residue" description="Phosphothreonine" evidence="1">
    <location>
        <position position="855"/>
    </location>
</feature>
<reference key="1">
    <citation type="journal article" date="2007" name="Nature">
        <title>Evolution of genes and genomes on the Drosophila phylogeny.</title>
        <authorList>
            <consortium name="Drosophila 12 genomes consortium"/>
        </authorList>
    </citation>
    <scope>NUCLEOTIDE SEQUENCE [LARGE SCALE GENOMIC DNA]</scope>
    <source>
        <strain>Rob3c / Tucson 14021-0248.25</strain>
    </source>
</reference>
<dbReference type="EC" id="5.6.2.-" evidence="2"/>
<dbReference type="EMBL" id="CH480819">
    <property type="protein sequence ID" value="EDW53035.1"/>
    <property type="molecule type" value="Genomic_DNA"/>
</dbReference>
<dbReference type="RefSeq" id="XP_002036876.1">
    <property type="nucleotide sequence ID" value="XM_002036840.1"/>
</dbReference>
<dbReference type="SMR" id="B4I0K4"/>
<dbReference type="STRING" id="7238.B4I0K4"/>
<dbReference type="EnsemblMetazoa" id="FBtr0195417">
    <property type="protein sequence ID" value="FBpp0193909"/>
    <property type="gene ID" value="FBgn0167369"/>
</dbReference>
<dbReference type="HOGENOM" id="CLU_006515_4_0_1"/>
<dbReference type="OMA" id="NCATIVA"/>
<dbReference type="PhylomeDB" id="B4I0K4"/>
<dbReference type="Proteomes" id="UP000001292">
    <property type="component" value="Unassembled WGS sequence"/>
</dbReference>
<dbReference type="GO" id="GO:0005634">
    <property type="term" value="C:nucleus"/>
    <property type="evidence" value="ECO:0000250"/>
    <property type="project" value="UniProtKB"/>
</dbReference>
<dbReference type="GO" id="GO:0051539">
    <property type="term" value="F:4 iron, 4 sulfur cluster binding"/>
    <property type="evidence" value="ECO:0007669"/>
    <property type="project" value="UniProtKB-UniRule"/>
</dbReference>
<dbReference type="GO" id="GO:0005524">
    <property type="term" value="F:ATP binding"/>
    <property type="evidence" value="ECO:0000250"/>
    <property type="project" value="UniProtKB"/>
</dbReference>
<dbReference type="GO" id="GO:0016887">
    <property type="term" value="F:ATP hydrolysis activity"/>
    <property type="evidence" value="ECO:0007669"/>
    <property type="project" value="RHEA"/>
</dbReference>
<dbReference type="GO" id="GO:0003677">
    <property type="term" value="F:DNA binding"/>
    <property type="evidence" value="ECO:0007669"/>
    <property type="project" value="UniProtKB-UniRule"/>
</dbReference>
<dbReference type="GO" id="GO:0003678">
    <property type="term" value="F:DNA helicase activity"/>
    <property type="evidence" value="ECO:0000250"/>
    <property type="project" value="UniProtKB"/>
</dbReference>
<dbReference type="GO" id="GO:0070182">
    <property type="term" value="F:DNA polymerase binding"/>
    <property type="evidence" value="ECO:0007669"/>
    <property type="project" value="TreeGrafter"/>
</dbReference>
<dbReference type="GO" id="GO:0046872">
    <property type="term" value="F:metal ion binding"/>
    <property type="evidence" value="ECO:0007669"/>
    <property type="project" value="UniProtKB-UniRule"/>
</dbReference>
<dbReference type="GO" id="GO:0006310">
    <property type="term" value="P:DNA recombination"/>
    <property type="evidence" value="ECO:0007669"/>
    <property type="project" value="InterPro"/>
</dbReference>
<dbReference type="GO" id="GO:0006281">
    <property type="term" value="P:DNA repair"/>
    <property type="evidence" value="ECO:0007669"/>
    <property type="project" value="UniProtKB-UniRule"/>
</dbReference>
<dbReference type="GO" id="GO:0006260">
    <property type="term" value="P:DNA replication"/>
    <property type="evidence" value="ECO:0007669"/>
    <property type="project" value="InterPro"/>
</dbReference>
<dbReference type="GO" id="GO:0045910">
    <property type="term" value="P:negative regulation of DNA recombination"/>
    <property type="evidence" value="ECO:0007669"/>
    <property type="project" value="TreeGrafter"/>
</dbReference>
<dbReference type="GO" id="GO:1904430">
    <property type="term" value="P:negative regulation of t-circle formation"/>
    <property type="evidence" value="ECO:0007669"/>
    <property type="project" value="TreeGrafter"/>
</dbReference>
<dbReference type="GO" id="GO:0010569">
    <property type="term" value="P:regulation of double-strand break repair via homologous recombination"/>
    <property type="evidence" value="ECO:0000250"/>
    <property type="project" value="UniProtKB"/>
</dbReference>
<dbReference type="GO" id="GO:0090657">
    <property type="term" value="P:telomeric loop disassembly"/>
    <property type="evidence" value="ECO:0007669"/>
    <property type="project" value="TreeGrafter"/>
</dbReference>
<dbReference type="CDD" id="cd13932">
    <property type="entry name" value="HN_RTEL1"/>
    <property type="match status" value="1"/>
</dbReference>
<dbReference type="CDD" id="cd18788">
    <property type="entry name" value="SF2_C_XPD"/>
    <property type="match status" value="1"/>
</dbReference>
<dbReference type="FunFam" id="3.40.50.300:FF:000431">
    <property type="entry name" value="Regulator of telomere elongation helicase 1"/>
    <property type="match status" value="1"/>
</dbReference>
<dbReference type="FunFam" id="1.20.1160.20:FF:000011">
    <property type="entry name" value="Regulator of telomere elongation helicase 1 homolog"/>
    <property type="match status" value="1"/>
</dbReference>
<dbReference type="Gene3D" id="1.20.1160.20">
    <property type="match status" value="1"/>
</dbReference>
<dbReference type="Gene3D" id="3.40.50.300">
    <property type="entry name" value="P-loop containing nucleotide triphosphate hydrolases"/>
    <property type="match status" value="2"/>
</dbReference>
<dbReference type="HAMAP" id="MF_03065">
    <property type="entry name" value="RTEL1"/>
    <property type="match status" value="1"/>
</dbReference>
<dbReference type="InterPro" id="IPR006555">
    <property type="entry name" value="ATP-dep_Helicase_C"/>
</dbReference>
<dbReference type="InterPro" id="IPR045028">
    <property type="entry name" value="DinG/Rad3-like"/>
</dbReference>
<dbReference type="InterPro" id="IPR014013">
    <property type="entry name" value="Helic_SF1/SF2_ATP-bd_DinG/Rad3"/>
</dbReference>
<dbReference type="InterPro" id="IPR006554">
    <property type="entry name" value="Helicase-like_DEXD_c2"/>
</dbReference>
<dbReference type="InterPro" id="IPR049909">
    <property type="entry name" value="HHD_RTEL1"/>
</dbReference>
<dbReference type="InterPro" id="IPR027417">
    <property type="entry name" value="P-loop_NTPase"/>
</dbReference>
<dbReference type="InterPro" id="IPR010614">
    <property type="entry name" value="RAD3-like_helicase_DEAD"/>
</dbReference>
<dbReference type="InterPro" id="IPR013020">
    <property type="entry name" value="Rad3/Chl1-like"/>
</dbReference>
<dbReference type="InterPro" id="IPR030845">
    <property type="entry name" value="RTEL1"/>
</dbReference>
<dbReference type="NCBIfam" id="TIGR00604">
    <property type="entry name" value="rad3"/>
    <property type="match status" value="1"/>
</dbReference>
<dbReference type="PANTHER" id="PTHR11472">
    <property type="entry name" value="DNA REPAIR DEAD HELICASE RAD3/XP-D SUBFAMILY MEMBER"/>
    <property type="match status" value="1"/>
</dbReference>
<dbReference type="PANTHER" id="PTHR11472:SF34">
    <property type="entry name" value="REGULATOR OF TELOMERE ELONGATION HELICASE 1"/>
    <property type="match status" value="1"/>
</dbReference>
<dbReference type="Pfam" id="PF23109">
    <property type="entry name" value="ARCH_RTEL1"/>
    <property type="match status" value="1"/>
</dbReference>
<dbReference type="Pfam" id="PF06733">
    <property type="entry name" value="DEAD_2"/>
    <property type="match status" value="1"/>
</dbReference>
<dbReference type="Pfam" id="PF13307">
    <property type="entry name" value="Helicase_C_2"/>
    <property type="match status" value="1"/>
</dbReference>
<dbReference type="SMART" id="SM00488">
    <property type="entry name" value="DEXDc2"/>
    <property type="match status" value="1"/>
</dbReference>
<dbReference type="SMART" id="SM00491">
    <property type="entry name" value="HELICc2"/>
    <property type="match status" value="1"/>
</dbReference>
<dbReference type="SUPFAM" id="SSF52540">
    <property type="entry name" value="P-loop containing nucleoside triphosphate hydrolases"/>
    <property type="match status" value="2"/>
</dbReference>
<dbReference type="PROSITE" id="PS51193">
    <property type="entry name" value="HELICASE_ATP_BIND_2"/>
    <property type="match status" value="1"/>
</dbReference>
<protein>
    <recommendedName>
        <fullName evidence="2">Regulator of telomere elongation helicase 1 homolog</fullName>
        <ecNumber evidence="2">5.6.2.-</ecNumber>
    </recommendedName>
</protein>
<sequence>MPESLIAGIPVHFPFEPYPVQRAYMEKVIHCLRDGTNGVLESPTGTGKTLSLLCSSLAWIRTRQSEHQMQMVKMEKADFSGIGGGAPGGDLSELAKTMGRANNWGVPKVIYASRTHSQLTQAMRELKRTAYANMRSVVLGSRDQLCIHPEVMRELGNSNKTNMCKLRVHSKTCSFQMRVESRKDHPDLRGPTIMDIEDLVKVGQRLKICPYFASRELARANKIELGNTIVILDEAHNIEKICEEYASVQIKSSDVAMTIEDITHIRQVFASGESQDMAGDEPKDFTLDDLTLLKEMLLELEKAIDAVVVDNAVDGTTFPASMMYELLGKANFTYGNVASIISLLDKLVQYLLVASQQMSIRKGGTFTLLSDLLTIVFANKEDVMSKVYASFKVHVLVEESKQGHGKQQGAKQQGGWLGKGTIAAATGSSKVAKIINFWCFNPGFGMEQLLNTQVRSVILTSGTLAPLKPLIAELAIPVAQHLENPHIVDQSQVYVKIIGTGPDRQQLISNYANRDNPKYVSSLGQTILNVARIVPDGLLVFFPSYPMLNKCVDAWQASGLWADISCKKPIFLEPRSKDQFTSTMEEFYQAIRDSKGAVFMAVCRGKVSEGLDFADRNGRAVIITGLPFPPLKDPKVILKRRYLEANRTRENQLLSGQEWYNLDATRAVNQAIGRVIRHRNDYGAILLCDSRFKDASQVQQLSKWIRGHLGDRPQCSPFGPIVRELRQFFKNAEANMKLPDERETDSPLETVCKTEVEPLAAIPKVKREPGSNATFKSANESAIKVEMANSIKTWTPADYASAAGRKLGGAAPNAMDFMSRLDSNVSSIDFNCCTDSKSGSSGLVKIHKRERSSPTAPESTSQVSKKRYKLVENIKVEPSSSQAKVAPEDRAAFLRELRSLVTQDQFRRFGKALLEYKNGTYESFQALMAILLDVLSAPKVRYMLVGMRKYLKNEHKEEFDRRVGNL</sequence>
<evidence type="ECO:0000250" key="1"/>
<evidence type="ECO:0000255" key="2">
    <source>
        <dbReference type="HAMAP-Rule" id="MF_03065"/>
    </source>
</evidence>
<evidence type="ECO:0000256" key="3">
    <source>
        <dbReference type="SAM" id="MobiDB-lite"/>
    </source>
</evidence>
<keyword id="KW-0004">4Fe-4S</keyword>
<keyword id="KW-0067">ATP-binding</keyword>
<keyword id="KW-0227">DNA damage</keyword>
<keyword id="KW-0234">DNA repair</keyword>
<keyword id="KW-0238">DNA-binding</keyword>
<keyword id="KW-0347">Helicase</keyword>
<keyword id="KW-0378">Hydrolase</keyword>
<keyword id="KW-0408">Iron</keyword>
<keyword id="KW-0411">Iron-sulfur</keyword>
<keyword id="KW-0413">Isomerase</keyword>
<keyword id="KW-0479">Metal-binding</keyword>
<keyword id="KW-0547">Nucleotide-binding</keyword>
<keyword id="KW-0539">Nucleus</keyword>
<keyword id="KW-0597">Phosphoprotein</keyword>
<keyword id="KW-1185">Reference proteome</keyword>